<protein>
    <recommendedName>
        <fullName evidence="1">Autonomous glycyl radical cofactor</fullName>
    </recommendedName>
</protein>
<evidence type="ECO:0000255" key="1">
    <source>
        <dbReference type="HAMAP-Rule" id="MF_00806"/>
    </source>
</evidence>
<keyword id="KW-0007">Acetylation</keyword>
<keyword id="KW-0556">Organic radical</keyword>
<keyword id="KW-1185">Reference proteome</keyword>
<name>GRCA_ECO45</name>
<feature type="chain" id="PRO_1000133981" description="Autonomous glycyl radical cofactor">
    <location>
        <begin position="1"/>
        <end position="127"/>
    </location>
</feature>
<feature type="domain" description="Glycine radical" evidence="1">
    <location>
        <begin position="5"/>
        <end position="127"/>
    </location>
</feature>
<feature type="modified residue" description="N6-acetyllysine" evidence="1">
    <location>
        <position position="48"/>
    </location>
</feature>
<feature type="modified residue" description="N6-acetyllysine" evidence="1">
    <location>
        <position position="88"/>
    </location>
</feature>
<feature type="modified residue" description="N6-acetyllysine" evidence="1">
    <location>
        <position position="92"/>
    </location>
</feature>
<feature type="modified residue" description="Glycine radical" evidence="1">
    <location>
        <position position="102"/>
    </location>
</feature>
<organism>
    <name type="scientific">Escherichia coli O45:K1 (strain S88 / ExPEC)</name>
    <dbReference type="NCBI Taxonomy" id="585035"/>
    <lineage>
        <taxon>Bacteria</taxon>
        <taxon>Pseudomonadati</taxon>
        <taxon>Pseudomonadota</taxon>
        <taxon>Gammaproteobacteria</taxon>
        <taxon>Enterobacterales</taxon>
        <taxon>Enterobacteriaceae</taxon>
        <taxon>Escherichia</taxon>
    </lineage>
</organism>
<proteinExistence type="inferred from homology"/>
<comment type="function">
    <text evidence="1">Acts as a radical domain for damaged PFL and possibly other radical proteins.</text>
</comment>
<accession>B7MIR4</accession>
<gene>
    <name evidence="1" type="primary">grcA</name>
    <name type="ordered locus">ECS88_2753</name>
</gene>
<sequence>MITGIQITKAANDDLLNSFWLLDSEKGEARCIVAKAGFAEDEVVAVSKLGDIEYREVPVEVKPEVRVEGGQHLNVNVLRRETLEDAVKHPEKYPQLTIRVSGYAVRFNSLTPEQQRDVIARTFTESL</sequence>
<dbReference type="EMBL" id="CU928161">
    <property type="protein sequence ID" value="CAR04016.1"/>
    <property type="molecule type" value="Genomic_DNA"/>
</dbReference>
<dbReference type="RefSeq" id="WP_000627804.1">
    <property type="nucleotide sequence ID" value="NC_011742.1"/>
</dbReference>
<dbReference type="SMR" id="B7MIR4"/>
<dbReference type="GeneID" id="89517377"/>
<dbReference type="KEGG" id="ecz:ECS88_2753"/>
<dbReference type="HOGENOM" id="CLU_133780_0_0_6"/>
<dbReference type="Proteomes" id="UP000000747">
    <property type="component" value="Chromosome"/>
</dbReference>
<dbReference type="GO" id="GO:0005829">
    <property type="term" value="C:cytosol"/>
    <property type="evidence" value="ECO:0007669"/>
    <property type="project" value="TreeGrafter"/>
</dbReference>
<dbReference type="GO" id="GO:0008861">
    <property type="term" value="F:formate C-acetyltransferase activity"/>
    <property type="evidence" value="ECO:0007669"/>
    <property type="project" value="TreeGrafter"/>
</dbReference>
<dbReference type="FunFam" id="3.20.70.20:FF:000002">
    <property type="entry name" value="Autonomous glycyl radical cofactor"/>
    <property type="match status" value="1"/>
</dbReference>
<dbReference type="Gene3D" id="3.20.70.20">
    <property type="match status" value="1"/>
</dbReference>
<dbReference type="HAMAP" id="MF_00806">
    <property type="entry name" value="GrcA"/>
    <property type="match status" value="1"/>
</dbReference>
<dbReference type="InterPro" id="IPR050244">
    <property type="entry name" value="Auton_GlycylRad_Cofactor"/>
</dbReference>
<dbReference type="InterPro" id="IPR019777">
    <property type="entry name" value="Form_AcTrfase_GR_CS"/>
</dbReference>
<dbReference type="InterPro" id="IPR001150">
    <property type="entry name" value="Gly_radical"/>
</dbReference>
<dbReference type="InterPro" id="IPR011140">
    <property type="entry name" value="Glycyl_radical_cofactor_GrcA"/>
</dbReference>
<dbReference type="NCBIfam" id="TIGR04365">
    <property type="entry name" value="spare_glycyl"/>
    <property type="match status" value="1"/>
</dbReference>
<dbReference type="PANTHER" id="PTHR30191">
    <property type="entry name" value="FORMATE ACETYLTRANSFERASE"/>
    <property type="match status" value="1"/>
</dbReference>
<dbReference type="PANTHER" id="PTHR30191:SF0">
    <property type="entry name" value="FORMATE ACETYLTRANSFERASE 1"/>
    <property type="match status" value="1"/>
</dbReference>
<dbReference type="Pfam" id="PF01228">
    <property type="entry name" value="Gly_radical"/>
    <property type="match status" value="1"/>
</dbReference>
<dbReference type="PIRSF" id="PIRSF000378">
    <property type="entry name" value="Gly_radicl_yfiD"/>
    <property type="match status" value="1"/>
</dbReference>
<dbReference type="SUPFAM" id="SSF51998">
    <property type="entry name" value="PFL-like glycyl radical enzymes"/>
    <property type="match status" value="1"/>
</dbReference>
<dbReference type="PROSITE" id="PS00850">
    <property type="entry name" value="GLY_RADICAL_1"/>
    <property type="match status" value="1"/>
</dbReference>
<dbReference type="PROSITE" id="PS51149">
    <property type="entry name" value="GLY_RADICAL_2"/>
    <property type="match status" value="1"/>
</dbReference>
<reference key="1">
    <citation type="journal article" date="2009" name="PLoS Genet.">
        <title>Organised genome dynamics in the Escherichia coli species results in highly diverse adaptive paths.</title>
        <authorList>
            <person name="Touchon M."/>
            <person name="Hoede C."/>
            <person name="Tenaillon O."/>
            <person name="Barbe V."/>
            <person name="Baeriswyl S."/>
            <person name="Bidet P."/>
            <person name="Bingen E."/>
            <person name="Bonacorsi S."/>
            <person name="Bouchier C."/>
            <person name="Bouvet O."/>
            <person name="Calteau A."/>
            <person name="Chiapello H."/>
            <person name="Clermont O."/>
            <person name="Cruveiller S."/>
            <person name="Danchin A."/>
            <person name="Diard M."/>
            <person name="Dossat C."/>
            <person name="Karoui M.E."/>
            <person name="Frapy E."/>
            <person name="Garry L."/>
            <person name="Ghigo J.M."/>
            <person name="Gilles A.M."/>
            <person name="Johnson J."/>
            <person name="Le Bouguenec C."/>
            <person name="Lescat M."/>
            <person name="Mangenot S."/>
            <person name="Martinez-Jehanne V."/>
            <person name="Matic I."/>
            <person name="Nassif X."/>
            <person name="Oztas S."/>
            <person name="Petit M.A."/>
            <person name="Pichon C."/>
            <person name="Rouy Z."/>
            <person name="Ruf C.S."/>
            <person name="Schneider D."/>
            <person name="Tourret J."/>
            <person name="Vacherie B."/>
            <person name="Vallenet D."/>
            <person name="Medigue C."/>
            <person name="Rocha E.P.C."/>
            <person name="Denamur E."/>
        </authorList>
    </citation>
    <scope>NUCLEOTIDE SEQUENCE [LARGE SCALE GENOMIC DNA]</scope>
    <source>
        <strain>S88 / ExPEC</strain>
    </source>
</reference>